<dbReference type="EMBL" id="BX571856">
    <property type="protein sequence ID" value="CAG41711.1"/>
    <property type="molecule type" value="Genomic_DNA"/>
</dbReference>
<dbReference type="RefSeq" id="WP_001643619.1">
    <property type="nucleotide sequence ID" value="NC_002952.2"/>
</dbReference>
<dbReference type="SMR" id="Q6GDE9"/>
<dbReference type="KEGG" id="sar:SAR2734"/>
<dbReference type="HOGENOM" id="CLU_005804_0_0_9"/>
<dbReference type="Proteomes" id="UP000000596">
    <property type="component" value="Chromosome"/>
</dbReference>
<dbReference type="GO" id="GO:0005576">
    <property type="term" value="C:extracellular region"/>
    <property type="evidence" value="ECO:0007669"/>
    <property type="project" value="UniProtKB-KW"/>
</dbReference>
<dbReference type="GO" id="GO:0016020">
    <property type="term" value="C:membrane"/>
    <property type="evidence" value="ECO:0007669"/>
    <property type="project" value="InterPro"/>
</dbReference>
<dbReference type="GO" id="GO:0005509">
    <property type="term" value="F:calcium ion binding"/>
    <property type="evidence" value="ECO:0007669"/>
    <property type="project" value="InterPro"/>
</dbReference>
<dbReference type="GO" id="GO:0007155">
    <property type="term" value="P:cell adhesion"/>
    <property type="evidence" value="ECO:0007669"/>
    <property type="project" value="UniProtKB-KW"/>
</dbReference>
<dbReference type="CDD" id="cd01951">
    <property type="entry name" value="lectin_L-type"/>
    <property type="match status" value="1"/>
</dbReference>
<dbReference type="Gene3D" id="2.60.120.200">
    <property type="match status" value="1"/>
</dbReference>
<dbReference type="Gene3D" id="2.60.40.10">
    <property type="entry name" value="Immunoglobulins"/>
    <property type="match status" value="2"/>
</dbReference>
<dbReference type="Gene3D" id="3.10.20.320">
    <property type="entry name" value="Putative peptidoglycan bound protein (lpxtg motif)"/>
    <property type="match status" value="1"/>
</dbReference>
<dbReference type="InterPro" id="IPR015919">
    <property type="entry name" value="Cadherin-like_sf"/>
</dbReference>
<dbReference type="InterPro" id="IPR013320">
    <property type="entry name" value="ConA-like_dom_sf"/>
</dbReference>
<dbReference type="InterPro" id="IPR013783">
    <property type="entry name" value="Ig-like_fold"/>
</dbReference>
<dbReference type="InterPro" id="IPR022263">
    <property type="entry name" value="KxYKxGKxW"/>
</dbReference>
<dbReference type="InterPro" id="IPR056573">
    <property type="entry name" value="Lectin_L-type_dom"/>
</dbReference>
<dbReference type="InterPro" id="IPR019931">
    <property type="entry name" value="LPXTG_anchor"/>
</dbReference>
<dbReference type="NCBIfam" id="TIGR03715">
    <property type="entry name" value="KxYKxGKxW"/>
    <property type="match status" value="1"/>
</dbReference>
<dbReference type="NCBIfam" id="TIGR01167">
    <property type="entry name" value="LPXTG_anchor"/>
    <property type="match status" value="1"/>
</dbReference>
<dbReference type="PANTHER" id="PTHR22928">
    <property type="entry name" value="TELOMERE-ASSOCIATED PROTEIN RIF1"/>
    <property type="match status" value="1"/>
</dbReference>
<dbReference type="PANTHER" id="PTHR22928:SF3">
    <property type="entry name" value="TELOMERE-ASSOCIATED PROTEIN RIF1"/>
    <property type="match status" value="1"/>
</dbReference>
<dbReference type="Pfam" id="PF00746">
    <property type="entry name" value="Gram_pos_anchor"/>
    <property type="match status" value="1"/>
</dbReference>
<dbReference type="Pfam" id="PF19258">
    <property type="entry name" value="KxYKxGKxW_sig"/>
    <property type="match status" value="1"/>
</dbReference>
<dbReference type="Pfam" id="PF18483">
    <property type="entry name" value="Lectin_L-type_dom"/>
    <property type="match status" value="1"/>
</dbReference>
<dbReference type="SUPFAM" id="SSF49313">
    <property type="entry name" value="Cadherin-like"/>
    <property type="match status" value="2"/>
</dbReference>
<dbReference type="SUPFAM" id="SSF49899">
    <property type="entry name" value="Concanavalin A-like lectins/glucanases"/>
    <property type="match status" value="1"/>
</dbReference>
<dbReference type="PROSITE" id="PS50847">
    <property type="entry name" value="GRAM_POS_ANCHORING"/>
    <property type="match status" value="1"/>
</dbReference>
<proteinExistence type="inferred from homology"/>
<name>SRAP_STAAR</name>
<organism>
    <name type="scientific">Staphylococcus aureus (strain MRSA252)</name>
    <dbReference type="NCBI Taxonomy" id="282458"/>
    <lineage>
        <taxon>Bacteria</taxon>
        <taxon>Bacillati</taxon>
        <taxon>Bacillota</taxon>
        <taxon>Bacilli</taxon>
        <taxon>Bacillales</taxon>
        <taxon>Staphylococcaceae</taxon>
        <taxon>Staphylococcus</taxon>
    </lineage>
</organism>
<reference key="1">
    <citation type="journal article" date="2004" name="Proc. Natl. Acad. Sci. U.S.A.">
        <title>Complete genomes of two clinical Staphylococcus aureus strains: evidence for the rapid evolution of virulence and drug resistance.</title>
        <authorList>
            <person name="Holden M.T.G."/>
            <person name="Feil E.J."/>
            <person name="Lindsay J.A."/>
            <person name="Peacock S.J."/>
            <person name="Day N.P.J."/>
            <person name="Enright M.C."/>
            <person name="Foster T.J."/>
            <person name="Moore C.E."/>
            <person name="Hurst L."/>
            <person name="Atkin R."/>
            <person name="Barron A."/>
            <person name="Bason N."/>
            <person name="Bentley S.D."/>
            <person name="Chillingworth C."/>
            <person name="Chillingworth T."/>
            <person name="Churcher C."/>
            <person name="Clark L."/>
            <person name="Corton C."/>
            <person name="Cronin A."/>
            <person name="Doggett J."/>
            <person name="Dowd L."/>
            <person name="Feltwell T."/>
            <person name="Hance Z."/>
            <person name="Harris B."/>
            <person name="Hauser H."/>
            <person name="Holroyd S."/>
            <person name="Jagels K."/>
            <person name="James K.D."/>
            <person name="Lennard N."/>
            <person name="Line A."/>
            <person name="Mayes R."/>
            <person name="Moule S."/>
            <person name="Mungall K."/>
            <person name="Ormond D."/>
            <person name="Quail M.A."/>
            <person name="Rabbinowitsch E."/>
            <person name="Rutherford K.M."/>
            <person name="Sanders M."/>
            <person name="Sharp S."/>
            <person name="Simmonds M."/>
            <person name="Stevens K."/>
            <person name="Whitehead S."/>
            <person name="Barrell B.G."/>
            <person name="Spratt B.G."/>
            <person name="Parkhill J."/>
        </authorList>
    </citation>
    <scope>NUCLEOTIDE SEQUENCE [LARGE SCALE GENOMIC DNA]</scope>
    <source>
        <strain>MRSA252</strain>
    </source>
</reference>
<keyword id="KW-0130">Cell adhesion</keyword>
<keyword id="KW-0134">Cell wall</keyword>
<keyword id="KW-0325">Glycoprotein</keyword>
<keyword id="KW-0572">Peptidoglycan-anchor</keyword>
<keyword id="KW-0964">Secreted</keyword>
<keyword id="KW-0732">Signal</keyword>
<keyword id="KW-0843">Virulence</keyword>
<comment type="function">
    <text evidence="1 3">Mediates binding to human platelets, possibly through a receptor-ligand interaction. Probably associated with virulence in endovascular infection (By similarity).</text>
</comment>
<comment type="subcellular location">
    <subcellularLocation>
        <location evidence="4">Secreted</location>
        <location evidence="4">Cell wall</location>
        <topology evidence="4">Peptidoglycan-anchor</topology>
    </subcellularLocation>
    <text evidence="3">Exported by the accessory SecA2/SecY2 system. Anchored to the cell wall by sortase A (By similarity).</text>
</comment>
<comment type="PTM">
    <text evidence="1 3">Proteolytically cleaved by a metalloprotease.</text>
</comment>
<comment type="PTM">
    <text evidence="2 3">Glycosylated (By similarity). It is probable that most of the Ser residues in SSR1 and SSR2 are O-GlcNAcylated. Sequential glycosylation by sugar transferases are able to generate complex sugar polymorphisms (By similarity).</text>
</comment>
<comment type="similarity">
    <text evidence="6">Belongs to the serine-rich repeat protein (SRRP) family.</text>
</comment>
<feature type="signal peptide" evidence="3">
    <location>
        <begin position="1"/>
        <end position="89"/>
    </location>
</feature>
<feature type="chain" id="PRO_0000273922" description="Serine-rich adhesin for platelets">
    <location>
        <begin position="90"/>
        <end position="1312"/>
    </location>
</feature>
<feature type="propeptide" id="PRO_0000273923" description="Removed by sortase" evidence="4">
    <location>
        <begin position="1313"/>
        <end position="1351"/>
    </location>
</feature>
<feature type="region of interest" description="Serine-rich repeat region 1, SRR1" evidence="3">
    <location>
        <begin position="90"/>
        <end position="230"/>
    </location>
</feature>
<feature type="region of interest" description="Disordered" evidence="5">
    <location>
        <begin position="100"/>
        <end position="228"/>
    </location>
</feature>
<feature type="region of interest" description="Non-repeat region (NRR)" evidence="3">
    <location>
        <begin position="231"/>
        <end position="751"/>
    </location>
</feature>
<feature type="region of interest" description="Disordered" evidence="5">
    <location>
        <begin position="751"/>
        <end position="1323"/>
    </location>
</feature>
<feature type="region of interest" description="Serine-rich repeat region 1, SRR1" evidence="3">
    <location>
        <begin position="752"/>
        <end position="1312"/>
    </location>
</feature>
<feature type="short sequence motif" description="LPXTG sorting signal" evidence="4">
    <location>
        <begin position="1309"/>
        <end position="1313"/>
    </location>
</feature>
<feature type="compositionally biased region" description="Polar residues" evidence="5">
    <location>
        <begin position="100"/>
        <end position="111"/>
    </location>
</feature>
<feature type="compositionally biased region" description="Low complexity" evidence="5">
    <location>
        <begin position="112"/>
        <end position="133"/>
    </location>
</feature>
<feature type="compositionally biased region" description="Low complexity" evidence="5">
    <location>
        <begin position="149"/>
        <end position="228"/>
    </location>
</feature>
<feature type="compositionally biased region" description="Low complexity" evidence="5">
    <location>
        <begin position="752"/>
        <end position="1294"/>
    </location>
</feature>
<feature type="modified residue" description="Pentaglycyl murein peptidoglycan amidated threonine" evidence="4">
    <location>
        <position position="1312"/>
    </location>
</feature>
<sequence>MSKRQKEFHDSLANEKTRVRLYKSGKNWVKSGIKEIEMFKIMGLPFISHSLVSQDNQSISKKITGYGLKTTAVIGGAFTVNMLHDQQAFAASDAPLTSELNTQSETVGNQNSTTIEASTSTTDSTSVTKNSSSEQTSNSDTVSSEKSENVTSTTNSTSNQQEKLTSTSESTSPKNTTSSSDTKSVTSISSTDQQTNTSTNQSTASNTTSQSTTPASANLNKTSTTSTSTAPIKLRTFSRLAMSTFASAATTSAVTANTITVNKDNLKQYMTTSGNATYDQSTGIVTLTQDAYSQKGAITLGTRIDSNKSFHFSGKVNLGNKYEGNGNGGDGIGFAFSPGVLGETGLNGAAVGIGGLSNAFGFKLDTYHNTSKPNAAAKANADPSNVAGGGAFGAFVTTDSYGVATTYTSSSAADNAAKLKVQPTNNTFQDFDINYNGDTKVMTVTYAGQTWTRNISDWIAKSGTTNFSLSMTASTGGATNLQQVQFGTFEYTESAVTQVRYVDVTTGKDIIPPKTYSGNVDQVVTIDNQQSALTAKGYNYTSVDSSYASTYNDTNKTVKMTNAGQSVTYYFTDVKAPTVTVGNQTIEVGKTMNPIVLTTTDNGTGTVTNTVTGLPSGLSYDSATNSIIGTPTKIGQSTVTVVSTDQANNKSTTTFTINVVDTTAPTVTPIGDQSSEVYSPISPIKIATQDNSGNAVTNTVTGLPSGLTFDSTNNTISGTPTNIGTSTITIVSTDASGNKTTTTFKYEVTRNSMSDSVSTSGSTQQSQSVSTSKADSQSASTSTSGSIVVSTSASTSKSTSVSLSDSVSASKSLSTSESNSVSSSTSTSLVNSQSVSSSMSGSVSKSTSLSDSISNSSSTEKSESLSTSTSDSLRTSTSLSDSVSMSTSGSLSKSQSLSTSTSDSASTSQSVSDSTSNSISTSESLSESASTSDSISISNSIANSQSASTSKSDSQSTSISLSTSDSKSMSTSESLSDSTSTSDSVSGSLSIATSQSVSTSSSDSMSTSEMISDSMSTSGSLAASDSKSMSVSSSMSTSQSGSTSESLSDSISTSDSDSKSLSLSTSQSGSTSTSTSTSSSVRTSESQSTSGSMSASQFDSTSISTSFSDSTSDSKSASTASSESISQSVSTSTSGSTSGSTSTSTSESLSMSGSDSTSVSDSTSMSESDSTSVSMSQDKSDSTSISDSESVSTSTSMSLSTSDSTSTSESLSTSMSGSQSISDSTSTSMSNSTSMSNSTSTSMSGSTSTSESNSMHPSDSMSMHHTHSTSTSRSSSEATTSTSESQSTLSATSEVTKHNGTPAQSEKRLPDTGDSIKQNGLLGGVMTLLVGLGLMKRKKKKDENDQDDSQA</sequence>
<accession>Q6GDE9</accession>
<gene>
    <name type="primary">sasA</name>
    <name type="ordered locus">SAR2734</name>
</gene>
<protein>
    <recommendedName>
        <fullName>Serine-rich adhesin for platelets</fullName>
    </recommendedName>
    <alternativeName>
        <fullName evidence="6">Adhesin SraP</fullName>
    </alternativeName>
    <alternativeName>
        <fullName>Staphylococcus aureus surface protein A</fullName>
    </alternativeName>
</protein>
<evidence type="ECO:0000250" key="1"/>
<evidence type="ECO:0000250" key="2">
    <source>
        <dbReference type="UniProtKB" id="A0A0H2URK1"/>
    </source>
</evidence>
<evidence type="ECO:0000250" key="3">
    <source>
        <dbReference type="UniProtKB" id="Q2FUW1"/>
    </source>
</evidence>
<evidence type="ECO:0000255" key="4">
    <source>
        <dbReference type="PROSITE-ProRule" id="PRU00477"/>
    </source>
</evidence>
<evidence type="ECO:0000256" key="5">
    <source>
        <dbReference type="SAM" id="MobiDB-lite"/>
    </source>
</evidence>
<evidence type="ECO:0000305" key="6"/>